<feature type="chain" id="PRO_0000174848" description="Co-chaperonin GroES">
    <location>
        <begin position="1"/>
        <end position="94"/>
    </location>
</feature>
<evidence type="ECO:0000255" key="1">
    <source>
        <dbReference type="HAMAP-Rule" id="MF_00580"/>
    </source>
</evidence>
<accession>Q5HMZ0</accession>
<name>CH10_STAEQ</name>
<comment type="function">
    <text evidence="1">Together with the chaperonin GroEL, plays an essential role in assisting protein folding. The GroEL-GroES system forms a nano-cage that allows encapsulation of the non-native substrate proteins and provides a physical environment optimized to promote and accelerate protein folding. GroES binds to the apical surface of the GroEL ring, thereby capping the opening of the GroEL channel.</text>
</comment>
<comment type="subunit">
    <text evidence="1">Heptamer of 7 subunits arranged in a ring. Interacts with the chaperonin GroEL.</text>
</comment>
<comment type="subcellular location">
    <subcellularLocation>
        <location evidence="1">Cytoplasm</location>
    </subcellularLocation>
</comment>
<comment type="similarity">
    <text evidence="1">Belongs to the GroES chaperonin family.</text>
</comment>
<protein>
    <recommendedName>
        <fullName evidence="1">Co-chaperonin GroES</fullName>
    </recommendedName>
    <alternativeName>
        <fullName evidence="1">10 kDa chaperonin</fullName>
    </alternativeName>
    <alternativeName>
        <fullName evidence="1">Chaperonin-10</fullName>
        <shortName evidence="1">Cpn10</shortName>
    </alternativeName>
</protein>
<keyword id="KW-0143">Chaperone</keyword>
<keyword id="KW-0963">Cytoplasm</keyword>
<keyword id="KW-1185">Reference proteome</keyword>
<dbReference type="EMBL" id="CP000029">
    <property type="protein sequence ID" value="AAW54810.1"/>
    <property type="molecule type" value="Genomic_DNA"/>
</dbReference>
<dbReference type="RefSeq" id="WP_001830378.1">
    <property type="nucleotide sequence ID" value="NC_002976.3"/>
</dbReference>
<dbReference type="SMR" id="Q5HMZ0"/>
<dbReference type="STRING" id="176279.SERP1485"/>
<dbReference type="GeneID" id="50018270"/>
<dbReference type="KEGG" id="ser:SERP1485"/>
<dbReference type="eggNOG" id="COG0234">
    <property type="taxonomic scope" value="Bacteria"/>
</dbReference>
<dbReference type="HOGENOM" id="CLU_132825_2_1_9"/>
<dbReference type="Proteomes" id="UP000000531">
    <property type="component" value="Chromosome"/>
</dbReference>
<dbReference type="GO" id="GO:0005737">
    <property type="term" value="C:cytoplasm"/>
    <property type="evidence" value="ECO:0007669"/>
    <property type="project" value="UniProtKB-SubCell"/>
</dbReference>
<dbReference type="GO" id="GO:0005524">
    <property type="term" value="F:ATP binding"/>
    <property type="evidence" value="ECO:0007669"/>
    <property type="project" value="InterPro"/>
</dbReference>
<dbReference type="GO" id="GO:0046872">
    <property type="term" value="F:metal ion binding"/>
    <property type="evidence" value="ECO:0007669"/>
    <property type="project" value="TreeGrafter"/>
</dbReference>
<dbReference type="GO" id="GO:0044183">
    <property type="term" value="F:protein folding chaperone"/>
    <property type="evidence" value="ECO:0007669"/>
    <property type="project" value="InterPro"/>
</dbReference>
<dbReference type="GO" id="GO:0051087">
    <property type="term" value="F:protein-folding chaperone binding"/>
    <property type="evidence" value="ECO:0007669"/>
    <property type="project" value="TreeGrafter"/>
</dbReference>
<dbReference type="GO" id="GO:0051082">
    <property type="term" value="F:unfolded protein binding"/>
    <property type="evidence" value="ECO:0007669"/>
    <property type="project" value="TreeGrafter"/>
</dbReference>
<dbReference type="GO" id="GO:0051085">
    <property type="term" value="P:chaperone cofactor-dependent protein refolding"/>
    <property type="evidence" value="ECO:0007669"/>
    <property type="project" value="TreeGrafter"/>
</dbReference>
<dbReference type="CDD" id="cd00320">
    <property type="entry name" value="cpn10"/>
    <property type="match status" value="1"/>
</dbReference>
<dbReference type="FunFam" id="2.30.33.40:FF:000001">
    <property type="entry name" value="10 kDa chaperonin"/>
    <property type="match status" value="1"/>
</dbReference>
<dbReference type="Gene3D" id="2.30.33.40">
    <property type="entry name" value="GroES chaperonin"/>
    <property type="match status" value="1"/>
</dbReference>
<dbReference type="HAMAP" id="MF_00580">
    <property type="entry name" value="CH10"/>
    <property type="match status" value="1"/>
</dbReference>
<dbReference type="InterPro" id="IPR020818">
    <property type="entry name" value="Chaperonin_GroES"/>
</dbReference>
<dbReference type="InterPro" id="IPR037124">
    <property type="entry name" value="Chaperonin_GroES_sf"/>
</dbReference>
<dbReference type="InterPro" id="IPR018369">
    <property type="entry name" value="Chaprnonin_Cpn10_CS"/>
</dbReference>
<dbReference type="InterPro" id="IPR011032">
    <property type="entry name" value="GroES-like_sf"/>
</dbReference>
<dbReference type="NCBIfam" id="NF001531">
    <property type="entry name" value="PRK00364.2-2"/>
    <property type="match status" value="1"/>
</dbReference>
<dbReference type="NCBIfam" id="NF001532">
    <property type="entry name" value="PRK00364.2-3"/>
    <property type="match status" value="1"/>
</dbReference>
<dbReference type="NCBIfam" id="NF001533">
    <property type="entry name" value="PRK00364.2-4"/>
    <property type="match status" value="1"/>
</dbReference>
<dbReference type="NCBIfam" id="NF001534">
    <property type="entry name" value="PRK00364.2-5"/>
    <property type="match status" value="1"/>
</dbReference>
<dbReference type="PANTHER" id="PTHR10772">
    <property type="entry name" value="10 KDA HEAT SHOCK PROTEIN"/>
    <property type="match status" value="1"/>
</dbReference>
<dbReference type="PANTHER" id="PTHR10772:SF58">
    <property type="entry name" value="CO-CHAPERONIN GROES"/>
    <property type="match status" value="1"/>
</dbReference>
<dbReference type="Pfam" id="PF00166">
    <property type="entry name" value="Cpn10"/>
    <property type="match status" value="1"/>
</dbReference>
<dbReference type="PRINTS" id="PR00297">
    <property type="entry name" value="CHAPERONIN10"/>
</dbReference>
<dbReference type="SMART" id="SM00883">
    <property type="entry name" value="Cpn10"/>
    <property type="match status" value="1"/>
</dbReference>
<dbReference type="SUPFAM" id="SSF50129">
    <property type="entry name" value="GroES-like"/>
    <property type="match status" value="1"/>
</dbReference>
<dbReference type="PROSITE" id="PS00681">
    <property type="entry name" value="CHAPERONINS_CPN10"/>
    <property type="match status" value="1"/>
</dbReference>
<sequence>MLKPLGNRVIIEKKEQEQTTKSGIVLTDSAKEKSNEGVIIAVGQGRLLDNGTQVAPQVSEGDTIVFQQYAGTEVKRGDKTYLILNEEDILAIIE</sequence>
<proteinExistence type="inferred from homology"/>
<reference key="1">
    <citation type="journal article" date="2005" name="J. Bacteriol.">
        <title>Insights on evolution of virulence and resistance from the complete genome analysis of an early methicillin-resistant Staphylococcus aureus strain and a biofilm-producing methicillin-resistant Staphylococcus epidermidis strain.</title>
        <authorList>
            <person name="Gill S.R."/>
            <person name="Fouts D.E."/>
            <person name="Archer G.L."/>
            <person name="Mongodin E.F."/>
            <person name="DeBoy R.T."/>
            <person name="Ravel J."/>
            <person name="Paulsen I.T."/>
            <person name="Kolonay J.F."/>
            <person name="Brinkac L.M."/>
            <person name="Beanan M.J."/>
            <person name="Dodson R.J."/>
            <person name="Daugherty S.C."/>
            <person name="Madupu R."/>
            <person name="Angiuoli S.V."/>
            <person name="Durkin A.S."/>
            <person name="Haft D.H."/>
            <person name="Vamathevan J.J."/>
            <person name="Khouri H."/>
            <person name="Utterback T.R."/>
            <person name="Lee C."/>
            <person name="Dimitrov G."/>
            <person name="Jiang L."/>
            <person name="Qin H."/>
            <person name="Weidman J."/>
            <person name="Tran K."/>
            <person name="Kang K.H."/>
            <person name="Hance I.R."/>
            <person name="Nelson K.E."/>
            <person name="Fraser C.M."/>
        </authorList>
    </citation>
    <scope>NUCLEOTIDE SEQUENCE [LARGE SCALE GENOMIC DNA]</scope>
    <source>
        <strain>ATCC 35984 / DSM 28319 / BCRC 17069 / CCUG 31568 / BM 3577 / RP62A</strain>
    </source>
</reference>
<gene>
    <name evidence="1" type="primary">groES</name>
    <name evidence="1" type="synonym">groS</name>
    <name type="ordered locus">SERP1485</name>
</gene>
<organism>
    <name type="scientific">Staphylococcus epidermidis (strain ATCC 35984 / DSM 28319 / BCRC 17069 / CCUG 31568 / BM 3577 / RP62A)</name>
    <dbReference type="NCBI Taxonomy" id="176279"/>
    <lineage>
        <taxon>Bacteria</taxon>
        <taxon>Bacillati</taxon>
        <taxon>Bacillota</taxon>
        <taxon>Bacilli</taxon>
        <taxon>Bacillales</taxon>
        <taxon>Staphylococcaceae</taxon>
        <taxon>Staphylococcus</taxon>
    </lineage>
</organism>